<protein>
    <recommendedName>
        <fullName evidence="2">Large ribosomal subunit protein uL18</fullName>
    </recommendedName>
    <alternativeName>
        <fullName>60S ribosomal protein L5</fullName>
    </alternativeName>
</protein>
<reference key="1">
    <citation type="journal article" date="1996" name="Mamm. Genome">
        <title>Evaluation and characterization of a porcine small intestine cDNA library: analysis of 839 clones.</title>
        <authorList>
            <person name="Winteroe A.K."/>
            <person name="Fredholm M."/>
            <person name="Davies W."/>
        </authorList>
    </citation>
    <scope>NUCLEOTIDE SEQUENCE [LARGE SCALE MRNA]</scope>
    <source>
        <tissue>Small intestine</tissue>
    </source>
</reference>
<name>RL5_PIG</name>
<organism>
    <name type="scientific">Sus scrofa</name>
    <name type="common">Pig</name>
    <dbReference type="NCBI Taxonomy" id="9823"/>
    <lineage>
        <taxon>Eukaryota</taxon>
        <taxon>Metazoa</taxon>
        <taxon>Chordata</taxon>
        <taxon>Craniata</taxon>
        <taxon>Vertebrata</taxon>
        <taxon>Euteleostomi</taxon>
        <taxon>Mammalia</taxon>
        <taxon>Eutheria</taxon>
        <taxon>Laurasiatheria</taxon>
        <taxon>Artiodactyla</taxon>
        <taxon>Suina</taxon>
        <taxon>Suidae</taxon>
        <taxon>Sus</taxon>
    </lineage>
</organism>
<sequence>MGFVKVVKNKAYFKRYQVKFRRRREGKTDYYARKRLVIQDKNKYNTPKYRMIVRVTNRDIICQIAYARIEGDMIVCAAYAHELPKYGVKVGLTNYAAAYCTGLLLARRLLNRFGMXKIYGGQVEV</sequence>
<feature type="initiator methionine" description="Removed" evidence="1">
    <location>
        <position position="1"/>
    </location>
</feature>
<feature type="chain" id="PRO_0000131434" description="Large ribosomal subunit protein uL18">
    <location>
        <begin position="2"/>
        <end position="125" status="greater than"/>
    </location>
</feature>
<feature type="modified residue" description="N-acetylglycine" evidence="1">
    <location>
        <position position="2"/>
    </location>
</feature>
<feature type="modified residue" description="N6-acetyllysine" evidence="1">
    <location>
        <position position="5"/>
    </location>
</feature>
<feature type="modified residue" description="N6-acetyllysine" evidence="1">
    <location>
        <position position="48"/>
    </location>
</feature>
<feature type="non-terminal residue">
    <location>
        <position position="125"/>
    </location>
</feature>
<comment type="function">
    <text evidence="1">Component of the ribosome, a large ribonucleoprotein complex responsible for the synthesis of proteins in the cell. The small ribosomal subunit (SSU) binds messenger RNAs (mRNAs) and translates the encoded message by selecting cognate aminoacyl-transfer RNA (tRNA) molecules. The large subunit (LSU) contains the ribosomal catalytic site termed the peptidyl transferase center (PTC), which catalyzes the formation of peptide bonds, thereby polymerizing the amino acids delivered by tRNAs into a polypeptide chain. The nascent polypeptides leave the ribosome through a tunnel in the LSU and interact with protein factors that function in enzymatic processing, targeting, and the membrane insertion of nascent chains at the exit of the ribosomal tunnel. As part of the 5S RNP/5S ribonucleoprotein particle it is an essential component of the LSU, required for its formation and the maturation of rRNAs. It also couples ribosome biogenesis to p53/TP53 activation. As part of the 5S RNP it accumulates in the nucleoplasm and inhibits MDM2, when ribosome biogenesis is perturbed, mediating the stabilization and the activation of TP53.</text>
</comment>
<comment type="subunit">
    <text evidence="1">Component of the large ribosomal subunit (LSU). Part of the 5S RNP complex, which is a LSU subcomplex composed of the 5S RNA, RPL5 and RPL11 (By similarity). Component of a hexameric 5S RNP precursor complex, composed of 5S RNA, RRS1, RPF2/BXDC1, RPL5, RPL11 and HEATR3; this complex acts as a precursor for ribosome assembly (By similarity). Interacts with NVL in an ATP-dependent manner. Interacts with RRP1B (By similarity). Interacts with IPO5, IPO7 and KPNB1; these interactions may be involved in RPL5 nuclear import for the assembly of ribosomal subunits (By similarity). Interacts with RRP1B (By similarity).</text>
</comment>
<comment type="subcellular location">
    <subcellularLocation>
        <location evidence="1">Cytoplasm</location>
    </subcellularLocation>
    <subcellularLocation>
        <location evidence="1">Nucleus</location>
        <location evidence="1">Nucleolus</location>
    </subcellularLocation>
    <text evidence="1">Although RP5 is functional within the cytoplasm, the assembly of ribosomal subunits occurs in the nucleus. RPL5 nuclear import is mediated by IPO5/RanBP5, IPO7/RanBP7, KPNB1/importin-beta or TPNO1/Trn.</text>
</comment>
<comment type="similarity">
    <text evidence="2">Belongs to the universal ribosomal protein uL18 family.</text>
</comment>
<accession>Q95276</accession>
<evidence type="ECO:0000250" key="1">
    <source>
        <dbReference type="UniProtKB" id="P46777"/>
    </source>
</evidence>
<evidence type="ECO:0000305" key="2"/>
<keyword id="KW-0007">Acetylation</keyword>
<keyword id="KW-0963">Cytoplasm</keyword>
<keyword id="KW-0539">Nucleus</keyword>
<keyword id="KW-1185">Reference proteome</keyword>
<keyword id="KW-0687">Ribonucleoprotein</keyword>
<keyword id="KW-0689">Ribosomal protein</keyword>
<keyword id="KW-0694">RNA-binding</keyword>
<keyword id="KW-0699">rRNA-binding</keyword>
<proteinExistence type="evidence at transcript level"/>
<dbReference type="EMBL" id="Z81207">
    <property type="protein sequence ID" value="CAB03565.1"/>
    <property type="molecule type" value="mRNA"/>
</dbReference>
<dbReference type="STRING" id="9823.ENSSSCP00000067120"/>
<dbReference type="PaxDb" id="9823-ENSSSCP00000007354"/>
<dbReference type="PeptideAtlas" id="Q95276"/>
<dbReference type="eggNOG" id="KOG0875">
    <property type="taxonomic scope" value="Eukaryota"/>
</dbReference>
<dbReference type="InParanoid" id="Q95276"/>
<dbReference type="Proteomes" id="UP000008227">
    <property type="component" value="Unplaced"/>
</dbReference>
<dbReference type="Proteomes" id="UP000314985">
    <property type="component" value="Unplaced"/>
</dbReference>
<dbReference type="Proteomes" id="UP000694570">
    <property type="component" value="Unplaced"/>
</dbReference>
<dbReference type="Proteomes" id="UP000694571">
    <property type="component" value="Unplaced"/>
</dbReference>
<dbReference type="Proteomes" id="UP000694720">
    <property type="component" value="Unplaced"/>
</dbReference>
<dbReference type="Proteomes" id="UP000694722">
    <property type="component" value="Unplaced"/>
</dbReference>
<dbReference type="Proteomes" id="UP000694723">
    <property type="component" value="Unplaced"/>
</dbReference>
<dbReference type="Proteomes" id="UP000694724">
    <property type="component" value="Unplaced"/>
</dbReference>
<dbReference type="Proteomes" id="UP000694725">
    <property type="component" value="Unplaced"/>
</dbReference>
<dbReference type="Proteomes" id="UP000694726">
    <property type="component" value="Unplaced"/>
</dbReference>
<dbReference type="Proteomes" id="UP000694727">
    <property type="component" value="Unplaced"/>
</dbReference>
<dbReference type="Proteomes" id="UP000694728">
    <property type="component" value="Unplaced"/>
</dbReference>
<dbReference type="GO" id="GO:0005737">
    <property type="term" value="C:cytoplasm"/>
    <property type="evidence" value="ECO:0000250"/>
    <property type="project" value="UniProtKB"/>
</dbReference>
<dbReference type="GO" id="GO:0005730">
    <property type="term" value="C:nucleolus"/>
    <property type="evidence" value="ECO:0000250"/>
    <property type="project" value="UniProtKB"/>
</dbReference>
<dbReference type="GO" id="GO:1990904">
    <property type="term" value="C:ribonucleoprotein complex"/>
    <property type="evidence" value="ECO:0007669"/>
    <property type="project" value="UniProtKB-KW"/>
</dbReference>
<dbReference type="GO" id="GO:0005840">
    <property type="term" value="C:ribosome"/>
    <property type="evidence" value="ECO:0007669"/>
    <property type="project" value="UniProtKB-KW"/>
</dbReference>
<dbReference type="GO" id="GO:0008097">
    <property type="term" value="F:5S rRNA binding"/>
    <property type="evidence" value="ECO:0007669"/>
    <property type="project" value="InterPro"/>
</dbReference>
<dbReference type="GO" id="GO:0003735">
    <property type="term" value="F:structural constituent of ribosome"/>
    <property type="evidence" value="ECO:0007669"/>
    <property type="project" value="InterPro"/>
</dbReference>
<dbReference type="GO" id="GO:0006412">
    <property type="term" value="P:translation"/>
    <property type="evidence" value="ECO:0007669"/>
    <property type="project" value="InterPro"/>
</dbReference>
<dbReference type="CDD" id="cd00432">
    <property type="entry name" value="Ribosomal_L18_L5e"/>
    <property type="match status" value="1"/>
</dbReference>
<dbReference type="FunFam" id="3.30.420.100:FF:000011">
    <property type="entry name" value="60S ribosomal protein L5"/>
    <property type="match status" value="1"/>
</dbReference>
<dbReference type="Gene3D" id="3.30.420.100">
    <property type="match status" value="1"/>
</dbReference>
<dbReference type="InterPro" id="IPR005485">
    <property type="entry name" value="Rbsml_uL18_euk"/>
</dbReference>
<dbReference type="PANTHER" id="PTHR23410:SF12">
    <property type="entry name" value="LARGE RIBOSOMAL SUBUNIT PROTEIN UL18"/>
    <property type="match status" value="1"/>
</dbReference>
<dbReference type="PANTHER" id="PTHR23410">
    <property type="entry name" value="RIBOSOMAL PROTEIN L5-RELATED"/>
    <property type="match status" value="1"/>
</dbReference>
<dbReference type="Pfam" id="PF17144">
    <property type="entry name" value="Ribosomal_L5e"/>
    <property type="match status" value="1"/>
</dbReference>
<dbReference type="PRINTS" id="PR00058">
    <property type="entry name" value="RIBOSOMALL5"/>
</dbReference>
<dbReference type="SUPFAM" id="SSF53137">
    <property type="entry name" value="Translational machinery components"/>
    <property type="match status" value="1"/>
</dbReference>
<gene>
    <name type="primary">RPL5</name>
</gene>